<dbReference type="EMBL" id="X61599">
    <property type="protein sequence ID" value="CAA43796.1"/>
    <property type="molecule type" value="mRNA"/>
</dbReference>
<dbReference type="PIR" id="S19694">
    <property type="entry name" value="S19694"/>
</dbReference>
<dbReference type="RefSeq" id="NP_999395.1">
    <property type="nucleotide sequence ID" value="NM_214230.1"/>
</dbReference>
<dbReference type="SMR" id="Q29116"/>
<dbReference type="FunCoup" id="Q29116">
    <property type="interactions" value="73"/>
</dbReference>
<dbReference type="STRING" id="9823.ENSSSCP00000047909"/>
<dbReference type="GlyCosmos" id="Q29116">
    <property type="glycosylation" value="9 sites, No reported glycans"/>
</dbReference>
<dbReference type="GlyGen" id="Q29116">
    <property type="glycosylation" value="10 sites"/>
</dbReference>
<dbReference type="PaxDb" id="9823-ENSSSCP00000005891"/>
<dbReference type="PeptideAtlas" id="Q29116"/>
<dbReference type="GeneID" id="397460"/>
<dbReference type="KEGG" id="ssc:397460"/>
<dbReference type="CTD" id="3371"/>
<dbReference type="eggNOG" id="KOG1225">
    <property type="taxonomic scope" value="Eukaryota"/>
</dbReference>
<dbReference type="InParanoid" id="Q29116"/>
<dbReference type="OrthoDB" id="442731at2759"/>
<dbReference type="Proteomes" id="UP000008227">
    <property type="component" value="Unplaced"/>
</dbReference>
<dbReference type="Proteomes" id="UP000314985">
    <property type="component" value="Unplaced"/>
</dbReference>
<dbReference type="Proteomes" id="UP000694570">
    <property type="component" value="Unplaced"/>
</dbReference>
<dbReference type="Proteomes" id="UP000694571">
    <property type="component" value="Unplaced"/>
</dbReference>
<dbReference type="Proteomes" id="UP000694720">
    <property type="component" value="Unplaced"/>
</dbReference>
<dbReference type="Proteomes" id="UP000694722">
    <property type="component" value="Unplaced"/>
</dbReference>
<dbReference type="Proteomes" id="UP000694723">
    <property type="component" value="Unplaced"/>
</dbReference>
<dbReference type="Proteomes" id="UP000694724">
    <property type="component" value="Unplaced"/>
</dbReference>
<dbReference type="Proteomes" id="UP000694725">
    <property type="component" value="Unplaced"/>
</dbReference>
<dbReference type="Proteomes" id="UP000694726">
    <property type="component" value="Unplaced"/>
</dbReference>
<dbReference type="Proteomes" id="UP000694727">
    <property type="component" value="Unplaced"/>
</dbReference>
<dbReference type="Proteomes" id="UP000694728">
    <property type="component" value="Unplaced"/>
</dbReference>
<dbReference type="GO" id="GO:0005615">
    <property type="term" value="C:extracellular space"/>
    <property type="evidence" value="ECO:0000318"/>
    <property type="project" value="GO_Central"/>
</dbReference>
<dbReference type="GO" id="GO:0098966">
    <property type="term" value="C:perisynaptic extracellular matrix"/>
    <property type="evidence" value="ECO:0000318"/>
    <property type="project" value="GO_Central"/>
</dbReference>
<dbReference type="GO" id="GO:0005178">
    <property type="term" value="F:integrin binding"/>
    <property type="evidence" value="ECO:0000250"/>
    <property type="project" value="UniProtKB"/>
</dbReference>
<dbReference type="GO" id="GO:0007155">
    <property type="term" value="P:cell adhesion"/>
    <property type="evidence" value="ECO:0007669"/>
    <property type="project" value="UniProtKB-KW"/>
</dbReference>
<dbReference type="GO" id="GO:0030155">
    <property type="term" value="P:regulation of cell adhesion"/>
    <property type="evidence" value="ECO:0000318"/>
    <property type="project" value="GO_Central"/>
</dbReference>
<dbReference type="CDD" id="cd00054">
    <property type="entry name" value="EGF_CA"/>
    <property type="match status" value="1"/>
</dbReference>
<dbReference type="CDD" id="cd00063">
    <property type="entry name" value="FN3"/>
    <property type="match status" value="10"/>
</dbReference>
<dbReference type="CDD" id="cd00087">
    <property type="entry name" value="FReD"/>
    <property type="match status" value="1"/>
</dbReference>
<dbReference type="FunFam" id="2.60.40.10:FF:000099">
    <property type="entry name" value="Fibronectin 1"/>
    <property type="match status" value="1"/>
</dbReference>
<dbReference type="FunFam" id="2.10.25.10:FF:000001">
    <property type="entry name" value="Tenascin C"/>
    <property type="match status" value="14"/>
</dbReference>
<dbReference type="FunFam" id="2.20.25.10:FF:000006">
    <property type="entry name" value="Tenascin C"/>
    <property type="match status" value="1"/>
</dbReference>
<dbReference type="FunFam" id="2.60.40.10:FF:000162">
    <property type="entry name" value="Tenascin C"/>
    <property type="match status" value="1"/>
</dbReference>
<dbReference type="FunFam" id="2.60.40.10:FF:000201">
    <property type="entry name" value="Tenascin C"/>
    <property type="match status" value="1"/>
</dbReference>
<dbReference type="FunFam" id="2.60.40.10:FF:000207">
    <property type="entry name" value="Tenascin C"/>
    <property type="match status" value="1"/>
</dbReference>
<dbReference type="FunFam" id="2.60.40.10:FF:000274">
    <property type="entry name" value="Tenascin C"/>
    <property type="match status" value="1"/>
</dbReference>
<dbReference type="FunFam" id="2.60.40.10:FF:000293">
    <property type="entry name" value="Tenascin C"/>
    <property type="match status" value="1"/>
</dbReference>
<dbReference type="FunFam" id="2.60.40.10:FF:000398">
    <property type="entry name" value="Tenascin C"/>
    <property type="match status" value="1"/>
</dbReference>
<dbReference type="FunFam" id="2.60.40.10:FF:000529">
    <property type="entry name" value="Tenascin C"/>
    <property type="match status" value="1"/>
</dbReference>
<dbReference type="FunFam" id="2.60.40.10:FF:000611">
    <property type="entry name" value="Tenascin C"/>
    <property type="match status" value="1"/>
</dbReference>
<dbReference type="FunFam" id="2.60.40.10:FF:000939">
    <property type="entry name" value="Tenascin C"/>
    <property type="match status" value="1"/>
</dbReference>
<dbReference type="FunFam" id="3.90.215.10:FF:000001">
    <property type="entry name" value="Tenascin isoform 1"/>
    <property type="match status" value="1"/>
</dbReference>
<dbReference type="Gene3D" id="2.20.25.10">
    <property type="match status" value="1"/>
</dbReference>
<dbReference type="Gene3D" id="3.90.215.10">
    <property type="entry name" value="Gamma Fibrinogen, chain A, domain 1"/>
    <property type="match status" value="1"/>
</dbReference>
<dbReference type="Gene3D" id="2.60.40.10">
    <property type="entry name" value="Immunoglobulins"/>
    <property type="match status" value="10"/>
</dbReference>
<dbReference type="Gene3D" id="2.10.25.10">
    <property type="entry name" value="Laminin"/>
    <property type="match status" value="14"/>
</dbReference>
<dbReference type="InterPro" id="IPR050991">
    <property type="entry name" value="ECM_Regulatory_Proteins"/>
</dbReference>
<dbReference type="InterPro" id="IPR000742">
    <property type="entry name" value="EGF-like_dom"/>
</dbReference>
<dbReference type="InterPro" id="IPR036056">
    <property type="entry name" value="Fibrinogen-like_C"/>
</dbReference>
<dbReference type="InterPro" id="IPR014716">
    <property type="entry name" value="Fibrinogen_a/b/g_C_1"/>
</dbReference>
<dbReference type="InterPro" id="IPR002181">
    <property type="entry name" value="Fibrinogen_a/b/g_C_dom"/>
</dbReference>
<dbReference type="InterPro" id="IPR003961">
    <property type="entry name" value="FN3_dom"/>
</dbReference>
<dbReference type="InterPro" id="IPR036116">
    <property type="entry name" value="FN3_sf"/>
</dbReference>
<dbReference type="InterPro" id="IPR013783">
    <property type="entry name" value="Ig-like_fold"/>
</dbReference>
<dbReference type="NCBIfam" id="NF040941">
    <property type="entry name" value="GGGWT_bact"/>
    <property type="match status" value="1"/>
</dbReference>
<dbReference type="PANTHER" id="PTHR46708">
    <property type="entry name" value="TENASCIN"/>
    <property type="match status" value="1"/>
</dbReference>
<dbReference type="PANTHER" id="PTHR46708:SF1">
    <property type="entry name" value="TENASCIN"/>
    <property type="match status" value="1"/>
</dbReference>
<dbReference type="Pfam" id="PF25024">
    <property type="entry name" value="EGF_TEN"/>
    <property type="match status" value="2"/>
</dbReference>
<dbReference type="Pfam" id="PF23106">
    <property type="entry name" value="EGF_Teneurin"/>
    <property type="match status" value="2"/>
</dbReference>
<dbReference type="Pfam" id="PF00147">
    <property type="entry name" value="Fibrinogen_C"/>
    <property type="match status" value="1"/>
</dbReference>
<dbReference type="Pfam" id="PF00041">
    <property type="entry name" value="fn3"/>
    <property type="match status" value="10"/>
</dbReference>
<dbReference type="SMART" id="SM00181">
    <property type="entry name" value="EGF"/>
    <property type="match status" value="14"/>
</dbReference>
<dbReference type="SMART" id="SM00186">
    <property type="entry name" value="FBG"/>
    <property type="match status" value="1"/>
</dbReference>
<dbReference type="SMART" id="SM00060">
    <property type="entry name" value="FN3"/>
    <property type="match status" value="10"/>
</dbReference>
<dbReference type="SUPFAM" id="SSF56496">
    <property type="entry name" value="Fibrinogen C-terminal domain-like"/>
    <property type="match status" value="1"/>
</dbReference>
<dbReference type="SUPFAM" id="SSF49265">
    <property type="entry name" value="Fibronectin type III"/>
    <property type="match status" value="7"/>
</dbReference>
<dbReference type="PROSITE" id="PS00022">
    <property type="entry name" value="EGF_1"/>
    <property type="match status" value="15"/>
</dbReference>
<dbReference type="PROSITE" id="PS01186">
    <property type="entry name" value="EGF_2"/>
    <property type="match status" value="14"/>
</dbReference>
<dbReference type="PROSITE" id="PS50026">
    <property type="entry name" value="EGF_3"/>
    <property type="match status" value="5"/>
</dbReference>
<dbReference type="PROSITE" id="PS51406">
    <property type="entry name" value="FIBRINOGEN_C_2"/>
    <property type="match status" value="1"/>
</dbReference>
<dbReference type="PROSITE" id="PS50853">
    <property type="entry name" value="FN3"/>
    <property type="match status" value="9"/>
</dbReference>
<accession>Q29116</accession>
<accession>P98142</accession>
<evidence type="ECO:0000250" key="1"/>
<evidence type="ECO:0000250" key="2">
    <source>
        <dbReference type="UniProtKB" id="P24821"/>
    </source>
</evidence>
<evidence type="ECO:0000255" key="3"/>
<evidence type="ECO:0000255" key="4">
    <source>
        <dbReference type="PROSITE-ProRule" id="PRU00076"/>
    </source>
</evidence>
<evidence type="ECO:0000255" key="5">
    <source>
        <dbReference type="PROSITE-ProRule" id="PRU00316"/>
    </source>
</evidence>
<evidence type="ECO:0000255" key="6">
    <source>
        <dbReference type="PROSITE-ProRule" id="PRU00739"/>
    </source>
</evidence>
<evidence type="ECO:0000269" key="7">
    <source>
    </source>
</evidence>
<evidence type="ECO:0000269" key="8">
    <source>
    </source>
</evidence>
<evidence type="ECO:0000303" key="9">
    <source>
    </source>
</evidence>
<evidence type="ECO:0000305" key="10"/>
<proteinExistence type="evidence at protein level"/>
<sequence>MGVVTRLLVGTFLASLALPAQGGVLKKVIRHKRQTGVNVTLPEESQPVVFNHVYNIKLPVGSQCSVDLESASGDKDLAAPSEPSESVQEHTVDGENQIVFTHRINIPRRACGCAAAPDVKELLSRLEELENLVSSLREQCTSGAGCCLQPAEGRLDTRPFCSGRGNFSTEGCGCVCEPGWKGPNCSEPECPSNCHLRGQCVDGQCVCNEGFTGEDCSQLACPSDCNDQGKCVNGVCVCFEGYSGVDCSRETCPVPCSEEHGRCVDGRCVCQEGFAGEDCNEPLCLHNCHGRGRCVENECVCDEGFTGEDCGELICPKDCFDRGRCINGTCYCDEGFEGEDCGRLACPHGCRGRGRCEEGQCVCDEGFAGADCSERRCPSDCHNRGRCLDGRCECDDGFEGEDCGELRCPGGCSGHGRCVNGQCVCDEGRTGEDCSQLRCPNDCHGRGRCVQGRCECEHGFQGYDCSEMSCPHDCHQHGRCVNGMCVCDDGYTGEDCRELRCPGDCSQRGRCVDGRCVCEHGFAGPDCADLACPSDCHGRGRCVNGQCVCHEGFTGKDCGQRRCPGDCHGQGRCVDGQCVCHEGFTGLDCGQRSCPNDCSNWGQCVSGRCICNEGYSGEDCSQVSPPKDLIVTEVTEETVNLAWDNEMRVTEYLIVYTPTHEDGLEMQFRVPGDQTSTTIRELEPGVEYFIRVFAILENKKSIPVSARVATYLPTPEGLKFKSIKETSVEVEWDPLDIAFETWEIIFRNMNKEDEGEITKSLRRPETTYRQTGLAPGQEYEISLHIVKNNTRGPGLKRVTTTRLDAPSQIEAKDVTDTTALITWFKPLAEIDGIELTYGIKDVPGDRTTIDLTHEENQYSIGNLKPDTEYEVSLISRRADMSSNPAKETFTTGLDAPRNLRRISQTDNSITLEWRNGKAAADTYRIKYAPISGGDHAEVEVPRSPQTTTKATLTGLRPGTEYGIGVSAVKGDKESDPATINAATDLDPPKDFRVSELKESSLTLLWRTPLAKFDRYRLNYGLPSGQPVEVQLPRNATSYILRGLEPGQEYTILLTAEKGRHKSKPARVKASTAGEPEIGNLSVSDITPESFSLSWTATEGAFETFTIEIIDSNRFLETMEYNISGAERTAHISGLRPGNDFIVYLSGLAPGIQTKPISATATTEAEPEVDNLLVSDATPDGFRLSWTADEGVFDSFVLKIRDTKKQSEPLEITLLASERTRDITGLREATEYEIELYGISSGKRSQPVSAIATTAMGSPKEITFSDITENSATVSWMVPTAQVESFRITYVPITGGAPSVVTVDGTKTQTRLLRLLPGVEYLVSVIAVKGFEESEPVSGTLTTALDGPSGLVTANITDSEALAMWQPAIAPVDHYVISYTGDRVPEITRTVSGNTVEYALTNLEPATEYTLRIFAEKGPQKSSTITTKFTTDLDSPRDLTATEVQSETALLTWRPPRASVTGYLLVYESVDGTLKEVVVGPETTSYSLSGLSPSTHYTARIQALNGPLRSKMSQTVFTTIGLLYPFPRDCSQAMLNGDTTSGLYTIYVNNDKAQKLEVFCDMTSDSGGWIVFLRRKNGREDFYRNWKAYAAGFGDLKEEFWLGLDALSKITAQGQYELRVDLRDHGETAYAVYDRFSVGDARTRYKLKVEGYSGTAGDSMAYHNGRSFSTFDKDTDSAITNCALSYKGAFWYKNCHRVNLMGRYGDNSHSQGVNWFHWKGHEYSIQFAEMKLRPSNFRNLEGRRKRA</sequence>
<protein>
    <recommendedName>
        <fullName>Tenascin</fullName>
        <shortName>TN</shortName>
    </recommendedName>
    <alternativeName>
        <fullName>Cytotactin</fullName>
    </alternativeName>
    <alternativeName>
        <fullName>GMEM</fullName>
    </alternativeName>
    <alternativeName>
        <fullName>GP 150-225</fullName>
    </alternativeName>
    <alternativeName>
        <fullName>Glioma-associated-extracellular matrix antigen</fullName>
    </alternativeName>
    <alternativeName>
        <fullName>Hexabrachion</fullName>
    </alternativeName>
    <alternativeName>
        <fullName>JI</fullName>
    </alternativeName>
    <alternativeName>
        <fullName>Myotendinous antigen</fullName>
    </alternativeName>
    <alternativeName>
        <fullName>Neuronectin</fullName>
    </alternativeName>
    <alternativeName>
        <fullName>P230</fullName>
    </alternativeName>
    <alternativeName>
        <fullName>Tenascin-C</fullName>
        <shortName>TN-C</shortName>
    </alternativeName>
</protein>
<reference key="1">
    <citation type="journal article" date="1991" name="Eur. J. Biochem.">
        <title>Complete primary structure of porcine tenascin. Detection of tenascin transcript in adult submaxillary glands.</title>
        <authorList>
            <person name="Nishi T."/>
            <person name="Weinstein J."/>
            <person name="Gillespie W.M."/>
            <person name="Paulson J.C."/>
        </authorList>
    </citation>
    <scope>NUCLEOTIDE SEQUENCE [MRNA] (ISOFORMS MAJOR; MINOR-1 AND MINOR-2)</scope>
    <scope>TISSUE SPECIFICITY</scope>
    <source>
        <tissue>Submandibular gland</tissue>
    </source>
</reference>
<reference key="2">
    <citation type="journal article" date="1997" name="J. Biochem.">
        <title>Isolation and characterization of a 230 kDa protein (p230) specifically expressed in fetal brains: its involvement in neurite outgrowth from rat cerebral cortex neurons grown on monolayer of astrocytes.</title>
        <authorList>
            <person name="Wakatsuki S."/>
            <person name="Ho S.H."/>
            <person name="Arioka M."/>
            <person name="Yamasaki M."/>
            <person name="Kitamoto K."/>
        </authorList>
    </citation>
    <scope>PROTEIN SEQUENCE OF 813-825; 887-917; 998-1011; 1597-1608 AND 1719-1730</scope>
    <scope>DEVELOPMENTAL STAGE</scope>
    <source>
        <tissue>Fetal brain</tissue>
    </source>
</reference>
<name>TENA_PIG</name>
<gene>
    <name type="primary">TNC</name>
    <name type="synonym">HXB</name>
</gene>
<keyword id="KW-0025">Alternative splicing</keyword>
<keyword id="KW-0130">Cell adhesion</keyword>
<keyword id="KW-0175">Coiled coil</keyword>
<keyword id="KW-0903">Direct protein sequencing</keyword>
<keyword id="KW-1015">Disulfide bond</keyword>
<keyword id="KW-0245">EGF-like domain</keyword>
<keyword id="KW-0272">Extracellular matrix</keyword>
<keyword id="KW-0325">Glycoprotein</keyword>
<keyword id="KW-0597">Phosphoprotein</keyword>
<keyword id="KW-0654">Proteoglycan</keyword>
<keyword id="KW-1185">Reference proteome</keyword>
<keyword id="KW-0677">Repeat</keyword>
<keyword id="KW-0964">Secreted</keyword>
<keyword id="KW-0732">Signal</keyword>
<feature type="signal peptide" evidence="3">
    <location>
        <begin position="1"/>
        <end position="22"/>
    </location>
</feature>
<feature type="chain" id="PRO_0000007742" description="Tenascin">
    <location>
        <begin position="23"/>
        <end position="1746"/>
    </location>
</feature>
<feature type="domain" description="EGF-like 1; incomplete" evidence="4">
    <location>
        <begin position="174"/>
        <end position="186"/>
    </location>
</feature>
<feature type="domain" description="EGF-like 2" evidence="4">
    <location>
        <begin position="187"/>
        <end position="217"/>
    </location>
</feature>
<feature type="domain" description="EGF-like 3" evidence="4">
    <location>
        <begin position="218"/>
        <end position="249"/>
    </location>
</feature>
<feature type="domain" description="EGF-like 4" evidence="4">
    <location>
        <begin position="250"/>
        <end position="280"/>
    </location>
</feature>
<feature type="domain" description="EGF-like 5" evidence="4">
    <location>
        <begin position="281"/>
        <end position="311"/>
    </location>
</feature>
<feature type="domain" description="EGF-like 6" evidence="4">
    <location>
        <begin position="312"/>
        <end position="342"/>
    </location>
</feature>
<feature type="domain" description="EGF-like 7" evidence="4">
    <location>
        <begin position="343"/>
        <end position="373"/>
    </location>
</feature>
<feature type="domain" description="EGF-like 8" evidence="4">
    <location>
        <begin position="374"/>
        <end position="404"/>
    </location>
</feature>
<feature type="domain" description="EGF-like 9" evidence="4">
    <location>
        <begin position="405"/>
        <end position="435"/>
    </location>
</feature>
<feature type="domain" description="EGF-like 10" evidence="4">
    <location>
        <begin position="436"/>
        <end position="466"/>
    </location>
</feature>
<feature type="domain" description="EGF-like 11" evidence="4">
    <location>
        <begin position="467"/>
        <end position="497"/>
    </location>
</feature>
<feature type="domain" description="EGF-like 12" evidence="4">
    <location>
        <begin position="498"/>
        <end position="528"/>
    </location>
</feature>
<feature type="domain" description="EGF-like 13" evidence="4">
    <location>
        <begin position="529"/>
        <end position="559"/>
    </location>
</feature>
<feature type="domain" description="EGF-like 14" evidence="4">
    <location>
        <begin position="560"/>
        <end position="589"/>
    </location>
</feature>
<feature type="domain" description="EGF-like 15" evidence="4">
    <location>
        <begin position="590"/>
        <end position="620"/>
    </location>
</feature>
<feature type="domain" description="Fibronectin type-III 1" evidence="5">
    <location>
        <begin position="625"/>
        <end position="717"/>
    </location>
</feature>
<feature type="domain" description="Fibronectin type-III 2" evidence="5">
    <location>
        <begin position="718"/>
        <end position="801"/>
    </location>
</feature>
<feature type="domain" description="Fibronectin type-III 3" evidence="5">
    <location>
        <begin position="805"/>
        <end position="894"/>
    </location>
</feature>
<feature type="domain" description="Fibronectin type-III 4" evidence="5">
    <location>
        <begin position="895"/>
        <end position="988"/>
    </location>
</feature>
<feature type="domain" description="Fibronectin type-III 5" evidence="5">
    <location>
        <begin position="989"/>
        <end position="1075"/>
    </location>
</feature>
<feature type="domain" description="Fibronectin type-III 6" evidence="5">
    <location>
        <begin position="1076"/>
        <end position="1166"/>
    </location>
</feature>
<feature type="domain" description="Fibronectin type-III 7" evidence="5">
    <location>
        <begin position="1167"/>
        <end position="1256"/>
    </location>
</feature>
<feature type="domain" description="Fibronectin type-III 8" evidence="5">
    <location>
        <begin position="1257"/>
        <end position="1346"/>
    </location>
</feature>
<feature type="domain" description="Fibronectin type-III 9" evidence="5">
    <location>
        <begin position="1347"/>
        <end position="1433"/>
    </location>
</feature>
<feature type="domain" description="Fibronectin type-III 10" evidence="5">
    <location>
        <begin position="1434"/>
        <end position="1522"/>
    </location>
</feature>
<feature type="domain" description="Fibrinogen C-terminal" evidence="6">
    <location>
        <begin position="1520"/>
        <end position="1735"/>
    </location>
</feature>
<feature type="region of interest" description="Involved in hexamer formation">
    <location>
        <begin position="23"/>
        <end position="185"/>
    </location>
</feature>
<feature type="coiled-coil region" evidence="3">
    <location>
        <begin position="118"/>
        <end position="145"/>
    </location>
</feature>
<feature type="modified residue" description="Phosphoserine" evidence="2">
    <location>
        <position position="65"/>
    </location>
</feature>
<feature type="modified residue" description="Phosphoserine" evidence="2">
    <location>
        <position position="70"/>
    </location>
</feature>
<feature type="modified residue" description="Phosphoserine" evidence="2">
    <location>
        <position position="72"/>
    </location>
</feature>
<feature type="modified residue" description="Phosphothreonine" evidence="2">
    <location>
        <position position="905"/>
    </location>
</feature>
<feature type="glycosylation site" description="N-linked (GlcNAc...) asparagine" evidence="3">
    <location>
        <position position="38"/>
    </location>
</feature>
<feature type="glycosylation site" description="O-linked (Xyl...) (chondroitin sulfate) serine" evidence="2">
    <location>
        <position position="72"/>
    </location>
</feature>
<feature type="glycosylation site" description="N-linked (GlcNAc...) asparagine" evidence="3">
    <location>
        <position position="166"/>
    </location>
</feature>
<feature type="glycosylation site" description="N-linked (GlcNAc...) asparagine" evidence="3">
    <location>
        <position position="184"/>
    </location>
</feature>
<feature type="glycosylation site" description="N-linked (GlcNAc...) asparagine" evidence="3">
    <location>
        <position position="327"/>
    </location>
</feature>
<feature type="glycosylation site" description="N-linked (GlcNAc...) asparagine" evidence="3">
    <location>
        <position position="788"/>
    </location>
</feature>
<feature type="glycosylation site" description="N-linked (GlcNAc...) asparagine" evidence="3">
    <location>
        <position position="1034"/>
    </location>
</feature>
<feature type="glycosylation site" description="N-linked (GlcNAc...) asparagine" evidence="3">
    <location>
        <position position="1079"/>
    </location>
</feature>
<feature type="glycosylation site" description="N-linked (GlcNAc...) asparagine" evidence="3">
    <location>
        <position position="1121"/>
    </location>
</feature>
<feature type="glycosylation site" description="N-linked (GlcNAc...) asparagine" evidence="3">
    <location>
        <position position="1354"/>
    </location>
</feature>
<feature type="disulfide bond" description="Interchain" evidence="4 6">
    <location>
        <position position="64"/>
    </location>
</feature>
<feature type="disulfide bond" evidence="1">
    <location>
        <begin position="190"/>
        <end position="200"/>
    </location>
</feature>
<feature type="disulfide bond" evidence="1">
    <location>
        <begin position="194"/>
        <end position="205"/>
    </location>
</feature>
<feature type="disulfide bond" evidence="1">
    <location>
        <begin position="207"/>
        <end position="216"/>
    </location>
</feature>
<feature type="disulfide bond" evidence="1">
    <location>
        <begin position="221"/>
        <end position="231"/>
    </location>
</feature>
<feature type="disulfide bond" evidence="1">
    <location>
        <begin position="225"/>
        <end position="236"/>
    </location>
</feature>
<feature type="disulfide bond" evidence="1">
    <location>
        <begin position="238"/>
        <end position="247"/>
    </location>
</feature>
<feature type="disulfide bond" evidence="1">
    <location>
        <begin position="252"/>
        <end position="263"/>
    </location>
</feature>
<feature type="disulfide bond" evidence="1">
    <location>
        <begin position="256"/>
        <end position="268"/>
    </location>
</feature>
<feature type="disulfide bond" evidence="1">
    <location>
        <begin position="270"/>
        <end position="279"/>
    </location>
</feature>
<feature type="disulfide bond" evidence="1">
    <location>
        <begin position="284"/>
        <end position="294"/>
    </location>
</feature>
<feature type="disulfide bond" evidence="1">
    <location>
        <begin position="288"/>
        <end position="299"/>
    </location>
</feature>
<feature type="disulfide bond" evidence="1">
    <location>
        <begin position="301"/>
        <end position="310"/>
    </location>
</feature>
<feature type="disulfide bond" evidence="1">
    <location>
        <begin position="315"/>
        <end position="325"/>
    </location>
</feature>
<feature type="disulfide bond" evidence="1">
    <location>
        <begin position="319"/>
        <end position="330"/>
    </location>
</feature>
<feature type="disulfide bond" evidence="1">
    <location>
        <begin position="332"/>
        <end position="341"/>
    </location>
</feature>
<feature type="disulfide bond" evidence="1">
    <location>
        <begin position="346"/>
        <end position="356"/>
    </location>
</feature>
<feature type="disulfide bond" evidence="1">
    <location>
        <begin position="350"/>
        <end position="361"/>
    </location>
</feature>
<feature type="disulfide bond" evidence="1">
    <location>
        <begin position="363"/>
        <end position="372"/>
    </location>
</feature>
<feature type="disulfide bond" evidence="1">
    <location>
        <begin position="377"/>
        <end position="387"/>
    </location>
</feature>
<feature type="disulfide bond" evidence="1">
    <location>
        <begin position="381"/>
        <end position="392"/>
    </location>
</feature>
<feature type="disulfide bond" evidence="1">
    <location>
        <begin position="394"/>
        <end position="403"/>
    </location>
</feature>
<feature type="disulfide bond" evidence="1">
    <location>
        <begin position="408"/>
        <end position="418"/>
    </location>
</feature>
<feature type="disulfide bond" evidence="1">
    <location>
        <begin position="412"/>
        <end position="423"/>
    </location>
</feature>
<feature type="disulfide bond" evidence="1">
    <location>
        <begin position="425"/>
        <end position="434"/>
    </location>
</feature>
<feature type="disulfide bond" evidence="1">
    <location>
        <begin position="439"/>
        <end position="449"/>
    </location>
</feature>
<feature type="disulfide bond" evidence="1">
    <location>
        <begin position="443"/>
        <end position="454"/>
    </location>
</feature>
<feature type="disulfide bond" evidence="1">
    <location>
        <begin position="456"/>
        <end position="465"/>
    </location>
</feature>
<feature type="disulfide bond" evidence="1">
    <location>
        <begin position="470"/>
        <end position="480"/>
    </location>
</feature>
<feature type="disulfide bond" evidence="1">
    <location>
        <begin position="474"/>
        <end position="485"/>
    </location>
</feature>
<feature type="disulfide bond" evidence="1">
    <location>
        <begin position="487"/>
        <end position="496"/>
    </location>
</feature>
<feature type="disulfide bond" evidence="1">
    <location>
        <begin position="501"/>
        <end position="511"/>
    </location>
</feature>
<feature type="disulfide bond" evidence="1">
    <location>
        <begin position="505"/>
        <end position="516"/>
    </location>
</feature>
<feature type="disulfide bond" evidence="1">
    <location>
        <begin position="518"/>
        <end position="527"/>
    </location>
</feature>
<feature type="disulfide bond" evidence="1">
    <location>
        <begin position="532"/>
        <end position="542"/>
    </location>
</feature>
<feature type="disulfide bond" evidence="1">
    <location>
        <begin position="536"/>
        <end position="547"/>
    </location>
</feature>
<feature type="disulfide bond" evidence="1">
    <location>
        <begin position="549"/>
        <end position="558"/>
    </location>
</feature>
<feature type="disulfide bond" evidence="1">
    <location>
        <begin position="563"/>
        <end position="573"/>
    </location>
</feature>
<feature type="disulfide bond" evidence="1">
    <location>
        <begin position="567"/>
        <end position="578"/>
    </location>
</feature>
<feature type="disulfide bond" evidence="1">
    <location>
        <begin position="580"/>
        <end position="589"/>
    </location>
</feature>
<feature type="disulfide bond" evidence="1">
    <location>
        <begin position="594"/>
        <end position="604"/>
    </location>
</feature>
<feature type="disulfide bond" evidence="1">
    <location>
        <begin position="598"/>
        <end position="609"/>
    </location>
</feature>
<feature type="disulfide bond" evidence="1">
    <location>
        <begin position="611"/>
        <end position="620"/>
    </location>
</feature>
<feature type="splice variant" id="VSP_001417" description="In isoform Minor-1." evidence="9">
    <location>
        <begin position="1072"/>
        <end position="1253"/>
    </location>
</feature>
<feature type="splice variant" id="VSP_001416" description="In isoform Major." evidence="9">
    <location>
        <begin position="1072"/>
        <end position="1162"/>
    </location>
</feature>
<feature type="sequence conflict" description="In Ref. 2; AA sequence." evidence="10" ref="2">
    <original>T</original>
    <variation>M</variation>
    <location>
        <position position="1007"/>
    </location>
</feature>
<comment type="function">
    <text evidence="2">Extracellular matrix protein implicated in guidance of migrating neurons as well as axons during development, synaptic plasticity as well as neuronal regeneration. Promotes neurite outgrowth from cortical neurons grown on a monolayer of astrocytes. Ligand for integrins alpha-8/beta-1, alpha-9/beta-1, alpha-V/beta-3 and alpha-V/beta-6. In tumors, stimulates angiogenesis by elongation, migration and sprouting of endothelial cells (By similarity).</text>
</comment>
<comment type="subunit">
    <text evidence="2">Homohexamer; disulfide-linked. A homotrimer may be formed in the triple coiled-coil region and may be stabilized by disulfide rings at both ends. Two of such half-hexabrachions may be disulfide linked within the central globule. Interacts with CSPG4 (By similarity). Interacts (via the 3rd fibronectin type-III domain) with integrin ITGA9:ITGB1 (By similarity).</text>
</comment>
<comment type="subcellular location">
    <subcellularLocation>
        <location>Secreted</location>
        <location>Extracellular space</location>
        <location>Extracellular matrix</location>
    </subcellularLocation>
</comment>
<comment type="alternative products">
    <event type="alternative splicing"/>
    <isoform>
        <id>Q29116-1</id>
        <name>Minor-2</name>
        <sequence type="displayed"/>
    </isoform>
    <isoform>
        <id>Q29116-2</id>
        <name>Major</name>
        <sequence type="described" ref="VSP_001416"/>
    </isoform>
    <isoform>
        <id>Q29116-3</id>
        <name>Minor-1</name>
        <sequence type="described" ref="VSP_001417"/>
    </isoform>
    <text>Isoforms are produced in a tissue- and time-specific manner during development.</text>
</comment>
<comment type="tissue specificity">
    <text evidence="7">Submaxillary glands and brain.</text>
</comment>
<comment type="developmental stage">
    <text evidence="8">Expressed in the fetal brain.</text>
</comment>
<comment type="similarity">
    <text evidence="10">Belongs to the tenascin family.</text>
</comment>
<organism>
    <name type="scientific">Sus scrofa</name>
    <name type="common">Pig</name>
    <dbReference type="NCBI Taxonomy" id="9823"/>
    <lineage>
        <taxon>Eukaryota</taxon>
        <taxon>Metazoa</taxon>
        <taxon>Chordata</taxon>
        <taxon>Craniata</taxon>
        <taxon>Vertebrata</taxon>
        <taxon>Euteleostomi</taxon>
        <taxon>Mammalia</taxon>
        <taxon>Eutheria</taxon>
        <taxon>Laurasiatheria</taxon>
        <taxon>Artiodactyla</taxon>
        <taxon>Suina</taxon>
        <taxon>Suidae</taxon>
        <taxon>Sus</taxon>
    </lineage>
</organism>